<gene>
    <name evidence="5" type="primary">PTAC12</name>
    <name evidence="7" type="ORF">ZEAMMB73_Zm00001d043325</name>
</gene>
<reference key="1">
    <citation type="journal article" date="2009" name="Science">
        <title>The B73 maize genome: complexity, diversity, and dynamics.</title>
        <authorList>
            <person name="Schnable P.S."/>
            <person name="Ware D."/>
            <person name="Fulton R.S."/>
            <person name="Stein J.C."/>
            <person name="Wei F."/>
            <person name="Pasternak S."/>
            <person name="Liang C."/>
            <person name="Zhang J."/>
            <person name="Fulton L."/>
            <person name="Graves T.A."/>
            <person name="Minx P."/>
            <person name="Reily A.D."/>
            <person name="Courtney L."/>
            <person name="Kruchowski S.S."/>
            <person name="Tomlinson C."/>
            <person name="Strong C."/>
            <person name="Delehaunty K."/>
            <person name="Fronick C."/>
            <person name="Courtney B."/>
            <person name="Rock S.M."/>
            <person name="Belter E."/>
            <person name="Du F."/>
            <person name="Kim K."/>
            <person name="Abbott R.M."/>
            <person name="Cotton M."/>
            <person name="Levy A."/>
            <person name="Marchetto P."/>
            <person name="Ochoa K."/>
            <person name="Jackson S.M."/>
            <person name="Gillam B."/>
            <person name="Chen W."/>
            <person name="Yan L."/>
            <person name="Higginbotham J."/>
            <person name="Cardenas M."/>
            <person name="Waligorski J."/>
            <person name="Applebaum E."/>
            <person name="Phelps L."/>
            <person name="Falcone J."/>
            <person name="Kanchi K."/>
            <person name="Thane T."/>
            <person name="Scimone A."/>
            <person name="Thane N."/>
            <person name="Henke J."/>
            <person name="Wang T."/>
            <person name="Ruppert J."/>
            <person name="Shah N."/>
            <person name="Rotter K."/>
            <person name="Hodges J."/>
            <person name="Ingenthron E."/>
            <person name="Cordes M."/>
            <person name="Kohlberg S."/>
            <person name="Sgro J."/>
            <person name="Delgado B."/>
            <person name="Mead K."/>
            <person name="Chinwalla A."/>
            <person name="Leonard S."/>
            <person name="Crouse K."/>
            <person name="Collura K."/>
            <person name="Kudrna D."/>
            <person name="Currie J."/>
            <person name="He R."/>
            <person name="Angelova A."/>
            <person name="Rajasekar S."/>
            <person name="Mueller T."/>
            <person name="Lomeli R."/>
            <person name="Scara G."/>
            <person name="Ko A."/>
            <person name="Delaney K."/>
            <person name="Wissotski M."/>
            <person name="Lopez G."/>
            <person name="Campos D."/>
            <person name="Braidotti M."/>
            <person name="Ashley E."/>
            <person name="Golser W."/>
            <person name="Kim H."/>
            <person name="Lee S."/>
            <person name="Lin J."/>
            <person name="Dujmic Z."/>
            <person name="Kim W."/>
            <person name="Talag J."/>
            <person name="Zuccolo A."/>
            <person name="Fan C."/>
            <person name="Sebastian A."/>
            <person name="Kramer M."/>
            <person name="Spiegel L."/>
            <person name="Nascimento L."/>
            <person name="Zutavern T."/>
            <person name="Miller B."/>
            <person name="Ambroise C."/>
            <person name="Muller S."/>
            <person name="Spooner W."/>
            <person name="Narechania A."/>
            <person name="Ren L."/>
            <person name="Wei S."/>
            <person name="Kumari S."/>
            <person name="Faga B."/>
            <person name="Levy M.J."/>
            <person name="McMahan L."/>
            <person name="Van Buren P."/>
            <person name="Vaughn M.W."/>
            <person name="Ying K."/>
            <person name="Yeh C.-T."/>
            <person name="Emrich S.J."/>
            <person name="Jia Y."/>
            <person name="Kalyanaraman A."/>
            <person name="Hsia A.-P."/>
            <person name="Barbazuk W.B."/>
            <person name="Baucom R.S."/>
            <person name="Brutnell T.P."/>
            <person name="Carpita N.C."/>
            <person name="Chaparro C."/>
            <person name="Chia J.-M."/>
            <person name="Deragon J.-M."/>
            <person name="Estill J.C."/>
            <person name="Fu Y."/>
            <person name="Jeddeloh J.A."/>
            <person name="Han Y."/>
            <person name="Lee H."/>
            <person name="Li P."/>
            <person name="Lisch D.R."/>
            <person name="Liu S."/>
            <person name="Liu Z."/>
            <person name="Nagel D.H."/>
            <person name="McCann M.C."/>
            <person name="SanMiguel P."/>
            <person name="Myers A.M."/>
            <person name="Nettleton D."/>
            <person name="Nguyen J."/>
            <person name="Penning B.W."/>
            <person name="Ponnala L."/>
            <person name="Schneider K.L."/>
            <person name="Schwartz D.C."/>
            <person name="Sharma A."/>
            <person name="Soderlund C."/>
            <person name="Springer N.M."/>
            <person name="Sun Q."/>
            <person name="Wang H."/>
            <person name="Waterman M."/>
            <person name="Westerman R."/>
            <person name="Wolfgruber T.K."/>
            <person name="Yang L."/>
            <person name="Yu Y."/>
            <person name="Zhang L."/>
            <person name="Zhou S."/>
            <person name="Zhu Q."/>
            <person name="Bennetzen J.L."/>
            <person name="Dawe R.K."/>
            <person name="Jiang J."/>
            <person name="Jiang N."/>
            <person name="Presting G.G."/>
            <person name="Wessler S.R."/>
            <person name="Aluru S."/>
            <person name="Martienssen R.A."/>
            <person name="Clifton S.W."/>
            <person name="McCombie W.R."/>
            <person name="Wing R.A."/>
            <person name="Wilson R.K."/>
        </authorList>
    </citation>
    <scope>NUCLEOTIDE SEQUENCE [LARGE SCALE GENOMIC DNA]</scope>
    <source>
        <strain>cv. B73</strain>
    </source>
</reference>
<reference key="2">
    <citation type="journal article" date="2009" name="Plant Mol. Biol.">
        <title>Insights into corn genes derived from large-scale cDNA sequencing.</title>
        <authorList>
            <person name="Alexandrov N.N."/>
            <person name="Brover V.V."/>
            <person name="Freidin S."/>
            <person name="Troukhan M.E."/>
            <person name="Tatarinova T.V."/>
            <person name="Zhang H."/>
            <person name="Swaller T.J."/>
            <person name="Lu Y.-P."/>
            <person name="Bouck J."/>
            <person name="Flavell R.B."/>
            <person name="Feldmann K.A."/>
        </authorList>
    </citation>
    <scope>NUCLEOTIDE SEQUENCE [LARGE SCALE MRNA]</scope>
</reference>
<reference key="3">
    <citation type="journal article" date="2009" name="PLoS Genet.">
        <title>Sequencing, mapping, and analysis of 27,455 maize full-length cDNAs.</title>
        <authorList>
            <person name="Soderlund C."/>
            <person name="Descour A."/>
            <person name="Kudrna D."/>
            <person name="Bomhoff M."/>
            <person name="Boyd L."/>
            <person name="Currie J."/>
            <person name="Angelova A."/>
            <person name="Collura K."/>
            <person name="Wissotski M."/>
            <person name="Ashley E."/>
            <person name="Morrow D."/>
            <person name="Fernandes J."/>
            <person name="Walbot V."/>
            <person name="Yu Y."/>
        </authorList>
    </citation>
    <scope>NUCLEOTIDE SEQUENCE [LARGE SCALE MRNA]</scope>
    <source>
        <strain>cv. B73</strain>
    </source>
</reference>
<reference key="4">
    <citation type="journal article" date="2014" name="Plant Physiol.">
        <title>A major role for the plastid-encoded RNA polymerase complex in the expression of plastid transfer RNAs.</title>
        <authorList>
            <person name="Williams-Carrier R."/>
            <person name="Zoschke R."/>
            <person name="Belcher S."/>
            <person name="Pfalz J."/>
            <person name="Barkan A."/>
        </authorList>
    </citation>
    <scope>FUNCTION</scope>
    <scope>DISRUPTION PHENOTYPE</scope>
</reference>
<reference key="5">
    <citation type="journal article" date="2015" name="New Phytol.">
        <title>ZmpTAC12 binds single-stranded nucleic acids and is essential for accumulation of the plastid-encoded polymerase complex in maize.</title>
        <authorList>
            <person name="Pfalz J."/>
            <person name="Holtzegel U."/>
            <person name="Barkan A."/>
            <person name="Weisheit W."/>
            <person name="Mittag M."/>
            <person name="Pfannschmidt T."/>
        </authorList>
    </citation>
    <scope>FUNCTION</scope>
    <scope>IDENTIFICATION BY MASS SPECTROMETRY</scope>
    <scope>SUBUNIT</scope>
    <scope>SUBCELLULAR LOCATION</scope>
</reference>
<protein>
    <recommendedName>
        <fullName evidence="6">Protein PLASTID TRANSCRIPTIONALLY ACTIVE 12, chloroplastic</fullName>
        <shortName evidence="5">ZmpTAC12</shortName>
    </recommendedName>
</protein>
<evidence type="ECO:0000255" key="1"/>
<evidence type="ECO:0000256" key="2">
    <source>
        <dbReference type="SAM" id="MobiDB-lite"/>
    </source>
</evidence>
<evidence type="ECO:0000269" key="3">
    <source>
    </source>
</evidence>
<evidence type="ECO:0000269" key="4">
    <source>
    </source>
</evidence>
<evidence type="ECO:0000303" key="5">
    <source>
    </source>
</evidence>
<evidence type="ECO:0000305" key="6"/>
<evidence type="ECO:0000312" key="7">
    <source>
        <dbReference type="EMBL" id="ONM37552.1"/>
    </source>
</evidence>
<sequence>MASCYNPWRLFPGMSTAVPAGPVTAPAHSRTCKSSKVFSALPHRRGLLFLGTRRARIKCVKDDSLHFDPSKIEPPPYSSYFDSTSGQLEPASGARASIPGKEYWPEGTAARVRAARAPAPVGESAGMPSFGTKPGSRRRGYKEQVTSASGTEGAQTDDRKDGDEPDVAIIGSGDDALEEIKDSVDEYVIYETPEEEELSEYDMDKMMGRPHPFIDPAKAMSLGEPKTSEELWWHWRRKSQEEEMWSRWQRRRPDVDTVFAKAMAETGQIKIFGDHPSRTEAALAKTRRHLYKEERLEAEQRRLEEIGPIAYYSEWVEAYKNKDTSREAIQKHFEETGEDENVQLIKMFQHQTAGEYRIMMGTDVRIQRDPLAMRMREDQIKQIWGGDPVYPTINYVQDPDEVIDYRGPEFHEPTPEVVPYLMEHGIMITKEELYARLNEEREDVNQDITYIPEAKDPMATAIDIGEHSYNEDSDDEDEDVDKAAAQPQSLEDEEDDRDDVAEVEEKVNQNWSALKSTGQAEKPKEKSKKDEMTLKEAIDDSENLTDFLMDFEETE</sequence>
<accession>B4FZ81</accession>
<accession>B6SV93</accession>
<comment type="function">
    <text evidence="3 4">Required for the activity of the plastid-encoded RNA polymerase (PEP) and full expression of genes transcribed by PEP (PubMed:24246379, PubMed:25599833). Required for the proper build-up and formation of the PEP-complex. Binds single-stranded (ss) DNA and RNA, but not double-stranded (ds) DNA (PubMed:25599833).</text>
</comment>
<comment type="subunit">
    <text evidence="4">Component of the plastid-encoded plastid RNA polymerase (PEP) complex.</text>
</comment>
<comment type="subcellular location">
    <subcellularLocation>
        <location evidence="4">Plastid</location>
        <location evidence="4">Chloroplast stroma</location>
    </subcellularLocation>
    <subcellularLocation>
        <location evidence="4">Nucleus</location>
    </subcellularLocation>
</comment>
<comment type="disruption phenotype">
    <text evidence="3">Pale yellow-green leaf phenotype. Reduced levels of plastid ribosomes and defects in plastid mRNA metabolism.</text>
</comment>
<feature type="transit peptide" description="Chloroplast" evidence="1">
    <location>
        <begin position="1"/>
        <end position="58"/>
    </location>
</feature>
<feature type="chain" id="PRO_0000441847" description="Protein PLASTID TRANSCRIPTIONALLY ACTIVE 12, chloroplastic">
    <location>
        <begin position="59"/>
        <end position="555"/>
    </location>
</feature>
<feature type="region of interest" description="Disordered" evidence="2">
    <location>
        <begin position="80"/>
        <end position="100"/>
    </location>
</feature>
<feature type="region of interest" description="Disordered" evidence="2">
    <location>
        <begin position="115"/>
        <end position="167"/>
    </location>
</feature>
<feature type="region of interest" description="Disordered" evidence="2">
    <location>
        <begin position="468"/>
        <end position="541"/>
    </location>
</feature>
<feature type="compositionally biased region" description="Polar residues" evidence="2">
    <location>
        <begin position="144"/>
        <end position="154"/>
    </location>
</feature>
<feature type="compositionally biased region" description="Acidic residues" evidence="2">
    <location>
        <begin position="471"/>
        <end position="480"/>
    </location>
</feature>
<feature type="compositionally biased region" description="Acidic residues" evidence="2">
    <location>
        <begin position="490"/>
        <end position="502"/>
    </location>
</feature>
<feature type="compositionally biased region" description="Polar residues" evidence="2">
    <location>
        <begin position="508"/>
        <end position="519"/>
    </location>
</feature>
<feature type="compositionally biased region" description="Basic and acidic residues" evidence="2">
    <location>
        <begin position="521"/>
        <end position="538"/>
    </location>
</feature>
<feature type="sequence conflict" description="In Ref. 2; ACG28776/ACG29056." evidence="6" ref="2">
    <original>S</original>
    <variation>G</variation>
    <location>
        <position position="39"/>
    </location>
</feature>
<feature type="sequence conflict" description="In Ref. 2; ACG28776/ACG29056." evidence="6" ref="2">
    <original>D</original>
    <variation>N</variation>
    <location>
        <position position="63"/>
    </location>
</feature>
<dbReference type="EMBL" id="CM007649">
    <property type="protein sequence ID" value="ONM37552.1"/>
    <property type="molecule type" value="Genomic_DNA"/>
</dbReference>
<dbReference type="EMBL" id="EU956658">
    <property type="protein sequence ID" value="ACG28776.1"/>
    <property type="molecule type" value="mRNA"/>
</dbReference>
<dbReference type="EMBL" id="EU956938">
    <property type="protein sequence ID" value="ACG29056.1"/>
    <property type="molecule type" value="mRNA"/>
</dbReference>
<dbReference type="EMBL" id="BT042419">
    <property type="protein sequence ID" value="ACF87424.1"/>
    <property type="molecule type" value="mRNA"/>
</dbReference>
<dbReference type="RefSeq" id="NP_001143074.1">
    <property type="nucleotide sequence ID" value="NM_001149602.1"/>
</dbReference>
<dbReference type="RefSeq" id="XP_008672559.1">
    <property type="nucleotide sequence ID" value="XM_008674337.1"/>
</dbReference>
<dbReference type="SMR" id="B4FZ81"/>
<dbReference type="FunCoup" id="B4FZ81">
    <property type="interactions" value="1687"/>
</dbReference>
<dbReference type="IntAct" id="B4FZ81">
    <property type="interactions" value="28"/>
</dbReference>
<dbReference type="STRING" id="4577.B4FZ81"/>
<dbReference type="PaxDb" id="4577-GRMZM5G897926_P02"/>
<dbReference type="EnsemblPlants" id="Zm00001eb152010_T001">
    <property type="protein sequence ID" value="Zm00001eb152010_P001"/>
    <property type="gene ID" value="Zm00001eb152010"/>
</dbReference>
<dbReference type="EnsemblPlants" id="Zm00001eb152010_T002">
    <property type="protein sequence ID" value="Zm00001eb152010_P002"/>
    <property type="gene ID" value="Zm00001eb152010"/>
</dbReference>
<dbReference type="EnsemblPlants" id="Zm00001eb152010_T003">
    <property type="protein sequence ID" value="Zm00001eb152010_P003"/>
    <property type="gene ID" value="Zm00001eb152010"/>
</dbReference>
<dbReference type="EnsemblPlants" id="Zm00001eb152010_T004">
    <property type="protein sequence ID" value="Zm00001eb152010_P004"/>
    <property type="gene ID" value="Zm00001eb152010"/>
</dbReference>
<dbReference type="GeneID" id="100275546"/>
<dbReference type="Gramene" id="Zm00001eb152010_T001">
    <property type="protein sequence ID" value="Zm00001eb152010_P001"/>
    <property type="gene ID" value="Zm00001eb152010"/>
</dbReference>
<dbReference type="Gramene" id="Zm00001eb152010_T002">
    <property type="protein sequence ID" value="Zm00001eb152010_P002"/>
    <property type="gene ID" value="Zm00001eb152010"/>
</dbReference>
<dbReference type="Gramene" id="Zm00001eb152010_T003">
    <property type="protein sequence ID" value="Zm00001eb152010_P003"/>
    <property type="gene ID" value="Zm00001eb152010"/>
</dbReference>
<dbReference type="Gramene" id="Zm00001eb152010_T004">
    <property type="protein sequence ID" value="Zm00001eb152010_P004"/>
    <property type="gene ID" value="Zm00001eb152010"/>
</dbReference>
<dbReference type="KEGG" id="zma:100275546"/>
<dbReference type="eggNOG" id="ENOG502QS8P">
    <property type="taxonomic scope" value="Eukaryota"/>
</dbReference>
<dbReference type="HOGENOM" id="CLU_037383_0_0_1"/>
<dbReference type="InParanoid" id="B4FZ81"/>
<dbReference type="OMA" id="GKEYWPE"/>
<dbReference type="OrthoDB" id="2019670at2759"/>
<dbReference type="Proteomes" id="UP000007305">
    <property type="component" value="Chromosome 3"/>
</dbReference>
<dbReference type="ExpressionAtlas" id="B4FZ81">
    <property type="expression patterns" value="baseline and differential"/>
</dbReference>
<dbReference type="GO" id="GO:0009507">
    <property type="term" value="C:chloroplast"/>
    <property type="evidence" value="ECO:0000318"/>
    <property type="project" value="GO_Central"/>
</dbReference>
<dbReference type="GO" id="GO:0009570">
    <property type="term" value="C:chloroplast stroma"/>
    <property type="evidence" value="ECO:0007669"/>
    <property type="project" value="UniProtKB-SubCell"/>
</dbReference>
<dbReference type="GO" id="GO:0005634">
    <property type="term" value="C:nucleus"/>
    <property type="evidence" value="ECO:0007669"/>
    <property type="project" value="UniProtKB-SubCell"/>
</dbReference>
<dbReference type="GO" id="GO:0000427">
    <property type="term" value="C:plastid-encoded plastid RNA polymerase complex"/>
    <property type="evidence" value="ECO:0007669"/>
    <property type="project" value="EnsemblPlants"/>
</dbReference>
<dbReference type="GO" id="GO:0003697">
    <property type="term" value="F:single-stranded DNA binding"/>
    <property type="evidence" value="ECO:0000314"/>
    <property type="project" value="UniProtKB"/>
</dbReference>
<dbReference type="GO" id="GO:0003727">
    <property type="term" value="F:single-stranded RNA binding"/>
    <property type="evidence" value="ECO:0000314"/>
    <property type="project" value="UniProtKB"/>
</dbReference>
<dbReference type="GO" id="GO:0140537">
    <property type="term" value="F:transcription regulator activator activity"/>
    <property type="evidence" value="ECO:0007669"/>
    <property type="project" value="EnsemblPlants"/>
</dbReference>
<dbReference type="GO" id="GO:0042793">
    <property type="term" value="P:plastid transcription"/>
    <property type="evidence" value="ECO:0000318"/>
    <property type="project" value="GO_Central"/>
</dbReference>
<dbReference type="GO" id="GO:0045893">
    <property type="term" value="P:positive regulation of DNA-templated transcription"/>
    <property type="evidence" value="ECO:0000318"/>
    <property type="project" value="GO_Central"/>
</dbReference>
<dbReference type="GO" id="GO:0090228">
    <property type="term" value="P:positive regulation of red or far-red light signaling pathway"/>
    <property type="evidence" value="ECO:0007669"/>
    <property type="project" value="EnsemblPlants"/>
</dbReference>
<dbReference type="GO" id="GO:0140922">
    <property type="term" value="P:positive regulation of thermomorphogenesis"/>
    <property type="evidence" value="ECO:0007669"/>
    <property type="project" value="EnsemblPlants"/>
</dbReference>
<dbReference type="GO" id="GO:0030163">
    <property type="term" value="P:protein catabolic process"/>
    <property type="evidence" value="ECO:0007669"/>
    <property type="project" value="EnsemblPlants"/>
</dbReference>
<dbReference type="GO" id="GO:0010468">
    <property type="term" value="P:regulation of gene expression"/>
    <property type="evidence" value="ECO:0000315"/>
    <property type="project" value="UniProtKB"/>
</dbReference>
<dbReference type="GO" id="GO:1905421">
    <property type="term" value="P:regulation of plant organ morphogenesis"/>
    <property type="evidence" value="ECO:0007669"/>
    <property type="project" value="EnsemblPlants"/>
</dbReference>
<dbReference type="GO" id="GO:0006357">
    <property type="term" value="P:regulation of transcription by RNA polymerase II"/>
    <property type="evidence" value="ECO:0007669"/>
    <property type="project" value="EnsemblPlants"/>
</dbReference>
<dbReference type="GO" id="GO:0009637">
    <property type="term" value="P:response to blue light"/>
    <property type="evidence" value="ECO:0007669"/>
    <property type="project" value="EnsemblPlants"/>
</dbReference>
<dbReference type="GO" id="GO:0009735">
    <property type="term" value="P:response to cytokinin"/>
    <property type="evidence" value="ECO:0007669"/>
    <property type="project" value="EnsemblPlants"/>
</dbReference>
<dbReference type="GO" id="GO:0010218">
    <property type="term" value="P:response to far red light"/>
    <property type="evidence" value="ECO:0007669"/>
    <property type="project" value="EnsemblPlants"/>
</dbReference>
<dbReference type="GO" id="GO:0010114">
    <property type="term" value="P:response to red light"/>
    <property type="evidence" value="ECO:0007669"/>
    <property type="project" value="EnsemblPlants"/>
</dbReference>
<dbReference type="GO" id="GO:0009266">
    <property type="term" value="P:response to temperature stimulus"/>
    <property type="evidence" value="ECO:0007669"/>
    <property type="project" value="EnsemblPlants"/>
</dbReference>
<dbReference type="GO" id="GO:0009650">
    <property type="term" value="P:UV protection"/>
    <property type="evidence" value="ECO:0007669"/>
    <property type="project" value="EnsemblPlants"/>
</dbReference>
<dbReference type="InterPro" id="IPR034581">
    <property type="entry name" value="PTAC12"/>
</dbReference>
<dbReference type="PANTHER" id="PTHR35720">
    <property type="entry name" value="PROTEIN PLASTID TRANSCRIPTIONALLY ACTIVE 12, CHLOROPLASTIC"/>
    <property type="match status" value="1"/>
</dbReference>
<dbReference type="PANTHER" id="PTHR35720:SF1">
    <property type="entry name" value="PROTEIN PLASTID TRANSCRIPTIONALLY ACTIVE 12, CHLOROPLASTIC"/>
    <property type="match status" value="1"/>
</dbReference>
<organism>
    <name type="scientific">Zea mays</name>
    <name type="common">Maize</name>
    <dbReference type="NCBI Taxonomy" id="4577"/>
    <lineage>
        <taxon>Eukaryota</taxon>
        <taxon>Viridiplantae</taxon>
        <taxon>Streptophyta</taxon>
        <taxon>Embryophyta</taxon>
        <taxon>Tracheophyta</taxon>
        <taxon>Spermatophyta</taxon>
        <taxon>Magnoliopsida</taxon>
        <taxon>Liliopsida</taxon>
        <taxon>Poales</taxon>
        <taxon>Poaceae</taxon>
        <taxon>PACMAD clade</taxon>
        <taxon>Panicoideae</taxon>
        <taxon>Andropogonodae</taxon>
        <taxon>Andropogoneae</taxon>
        <taxon>Tripsacinae</taxon>
        <taxon>Zea</taxon>
    </lineage>
</organism>
<keyword id="KW-0150">Chloroplast</keyword>
<keyword id="KW-0539">Nucleus</keyword>
<keyword id="KW-0934">Plastid</keyword>
<keyword id="KW-1185">Reference proteome</keyword>
<keyword id="KW-0804">Transcription</keyword>
<keyword id="KW-0805">Transcription regulation</keyword>
<keyword id="KW-0809">Transit peptide</keyword>
<name>PTA12_MAIZE</name>
<proteinExistence type="evidence at protein level"/>